<feature type="chain" id="PRO_0000123229" description="Small ribosomal subunit protein uS11">
    <location>
        <begin position="1"/>
        <end position="127"/>
    </location>
</feature>
<evidence type="ECO:0000255" key="1">
    <source>
        <dbReference type="HAMAP-Rule" id="MF_01310"/>
    </source>
</evidence>
<evidence type="ECO:0000305" key="2"/>
<accession>P66364</accession>
<accession>Q8K8X0</accession>
<accession>Q8P2Z3</accession>
<proteinExistence type="inferred from homology"/>
<gene>
    <name evidence="1" type="primary">rpsK</name>
    <name type="ordered locus">SAG0083</name>
</gene>
<name>RS11_STRA5</name>
<sequence>MAKPTRKRRVKKNIESGVAHIHATFNNTIVMITDVHGNALAWSSAGALGFKGSRKSTPFAAQMAAEAAAKSAQEHGLKTVEVTVKGPGSGRESAIRALAAAGLEVTAIRDVTPVPHNGARPPKRRRV</sequence>
<organism>
    <name type="scientific">Streptococcus agalactiae serotype V (strain ATCC BAA-611 / 2603 V/R)</name>
    <dbReference type="NCBI Taxonomy" id="208435"/>
    <lineage>
        <taxon>Bacteria</taxon>
        <taxon>Bacillati</taxon>
        <taxon>Bacillota</taxon>
        <taxon>Bacilli</taxon>
        <taxon>Lactobacillales</taxon>
        <taxon>Streptococcaceae</taxon>
        <taxon>Streptococcus</taxon>
    </lineage>
</organism>
<protein>
    <recommendedName>
        <fullName evidence="1">Small ribosomal subunit protein uS11</fullName>
    </recommendedName>
    <alternativeName>
        <fullName evidence="2">30S ribosomal protein S11</fullName>
    </alternativeName>
</protein>
<keyword id="KW-1185">Reference proteome</keyword>
<keyword id="KW-0687">Ribonucleoprotein</keyword>
<keyword id="KW-0689">Ribosomal protein</keyword>
<keyword id="KW-0694">RNA-binding</keyword>
<keyword id="KW-0699">rRNA-binding</keyword>
<comment type="function">
    <text evidence="1">Located on the platform of the 30S subunit, it bridges several disparate RNA helices of the 16S rRNA. Forms part of the Shine-Dalgarno cleft in the 70S ribosome.</text>
</comment>
<comment type="subunit">
    <text evidence="1">Part of the 30S ribosomal subunit. Interacts with proteins S7 and S18. Binds to IF-3.</text>
</comment>
<comment type="similarity">
    <text evidence="1">Belongs to the universal ribosomal protein uS11 family.</text>
</comment>
<comment type="sequence caution" evidence="2">
    <conflict type="erroneous initiation">
        <sequence resource="EMBL-CDS" id="AAM98991"/>
    </conflict>
</comment>
<reference key="1">
    <citation type="journal article" date="2002" name="Proc. Natl. Acad. Sci. U.S.A.">
        <title>Complete genome sequence and comparative genomic analysis of an emerging human pathogen, serotype V Streptococcus agalactiae.</title>
        <authorList>
            <person name="Tettelin H."/>
            <person name="Masignani V."/>
            <person name="Cieslewicz M.J."/>
            <person name="Eisen J.A."/>
            <person name="Peterson S.N."/>
            <person name="Wessels M.R."/>
            <person name="Paulsen I.T."/>
            <person name="Nelson K.E."/>
            <person name="Margarit I."/>
            <person name="Read T.D."/>
            <person name="Madoff L.C."/>
            <person name="Wolf A.M."/>
            <person name="Beanan M.J."/>
            <person name="Brinkac L.M."/>
            <person name="Daugherty S.C."/>
            <person name="DeBoy R.T."/>
            <person name="Durkin A.S."/>
            <person name="Kolonay J.F."/>
            <person name="Madupu R."/>
            <person name="Lewis M.R."/>
            <person name="Radune D."/>
            <person name="Fedorova N.B."/>
            <person name="Scanlan D."/>
            <person name="Khouri H.M."/>
            <person name="Mulligan S."/>
            <person name="Carty H.A."/>
            <person name="Cline R.T."/>
            <person name="Van Aken S.E."/>
            <person name="Gill J."/>
            <person name="Scarselli M."/>
            <person name="Mora M."/>
            <person name="Iacobini E.T."/>
            <person name="Brettoni C."/>
            <person name="Galli G."/>
            <person name="Mariani M."/>
            <person name="Vegni F."/>
            <person name="Maione D."/>
            <person name="Rinaudo D."/>
            <person name="Rappuoli R."/>
            <person name="Telford J.L."/>
            <person name="Kasper D.L."/>
            <person name="Grandi G."/>
            <person name="Fraser C.M."/>
        </authorList>
    </citation>
    <scope>NUCLEOTIDE SEQUENCE [LARGE SCALE GENOMIC DNA]</scope>
    <source>
        <strain>ATCC BAA-611 / 2603 V/R</strain>
    </source>
</reference>
<dbReference type="EMBL" id="AE009948">
    <property type="protein sequence ID" value="AAM98991.1"/>
    <property type="status" value="ALT_INIT"/>
    <property type="molecule type" value="Genomic_DNA"/>
</dbReference>
<dbReference type="RefSeq" id="NP_687119.2">
    <property type="nucleotide sequence ID" value="NC_004116.1"/>
</dbReference>
<dbReference type="RefSeq" id="WP_001118387.1">
    <property type="nucleotide sequence ID" value="NC_004116.1"/>
</dbReference>
<dbReference type="SMR" id="P66364"/>
<dbReference type="STRING" id="208435.SAG0083"/>
<dbReference type="GeneID" id="93825319"/>
<dbReference type="KEGG" id="sag:SAG0083"/>
<dbReference type="PATRIC" id="fig|208435.3.peg.82"/>
<dbReference type="HOGENOM" id="CLU_072439_5_0_9"/>
<dbReference type="OrthoDB" id="9806415at2"/>
<dbReference type="PRO" id="PR:P66364"/>
<dbReference type="Proteomes" id="UP000000821">
    <property type="component" value="Chromosome"/>
</dbReference>
<dbReference type="GO" id="GO:1990904">
    <property type="term" value="C:ribonucleoprotein complex"/>
    <property type="evidence" value="ECO:0007669"/>
    <property type="project" value="UniProtKB-KW"/>
</dbReference>
<dbReference type="GO" id="GO:0005840">
    <property type="term" value="C:ribosome"/>
    <property type="evidence" value="ECO:0007669"/>
    <property type="project" value="UniProtKB-KW"/>
</dbReference>
<dbReference type="GO" id="GO:0019843">
    <property type="term" value="F:rRNA binding"/>
    <property type="evidence" value="ECO:0007669"/>
    <property type="project" value="UniProtKB-UniRule"/>
</dbReference>
<dbReference type="GO" id="GO:0003735">
    <property type="term" value="F:structural constituent of ribosome"/>
    <property type="evidence" value="ECO:0007669"/>
    <property type="project" value="InterPro"/>
</dbReference>
<dbReference type="GO" id="GO:0006412">
    <property type="term" value="P:translation"/>
    <property type="evidence" value="ECO:0007669"/>
    <property type="project" value="UniProtKB-UniRule"/>
</dbReference>
<dbReference type="FunFam" id="3.30.420.80:FF:000001">
    <property type="entry name" value="30S ribosomal protein S11"/>
    <property type="match status" value="1"/>
</dbReference>
<dbReference type="Gene3D" id="3.30.420.80">
    <property type="entry name" value="Ribosomal protein S11"/>
    <property type="match status" value="1"/>
</dbReference>
<dbReference type="HAMAP" id="MF_01310">
    <property type="entry name" value="Ribosomal_uS11"/>
    <property type="match status" value="1"/>
</dbReference>
<dbReference type="InterPro" id="IPR001971">
    <property type="entry name" value="Ribosomal_uS11"/>
</dbReference>
<dbReference type="InterPro" id="IPR019981">
    <property type="entry name" value="Ribosomal_uS11_bac-type"/>
</dbReference>
<dbReference type="InterPro" id="IPR018102">
    <property type="entry name" value="Ribosomal_uS11_CS"/>
</dbReference>
<dbReference type="InterPro" id="IPR036967">
    <property type="entry name" value="Ribosomal_uS11_sf"/>
</dbReference>
<dbReference type="NCBIfam" id="NF003698">
    <property type="entry name" value="PRK05309.1"/>
    <property type="match status" value="1"/>
</dbReference>
<dbReference type="NCBIfam" id="TIGR03632">
    <property type="entry name" value="uS11_bact"/>
    <property type="match status" value="1"/>
</dbReference>
<dbReference type="PANTHER" id="PTHR11759">
    <property type="entry name" value="40S RIBOSOMAL PROTEIN S14/30S RIBOSOMAL PROTEIN S11"/>
    <property type="match status" value="1"/>
</dbReference>
<dbReference type="Pfam" id="PF00411">
    <property type="entry name" value="Ribosomal_S11"/>
    <property type="match status" value="1"/>
</dbReference>
<dbReference type="PIRSF" id="PIRSF002131">
    <property type="entry name" value="Ribosomal_S11"/>
    <property type="match status" value="1"/>
</dbReference>
<dbReference type="SUPFAM" id="SSF53137">
    <property type="entry name" value="Translational machinery components"/>
    <property type="match status" value="1"/>
</dbReference>
<dbReference type="PROSITE" id="PS00054">
    <property type="entry name" value="RIBOSOMAL_S11"/>
    <property type="match status" value="1"/>
</dbReference>